<gene>
    <name evidence="2" type="primary">yejK</name>
    <name type="ordered locus">SF2273</name>
    <name type="ordered locus">S2402</name>
</gene>
<reference key="1">
    <citation type="journal article" date="2002" name="Nucleic Acids Res.">
        <title>Genome sequence of Shigella flexneri 2a: insights into pathogenicity through comparison with genomes of Escherichia coli K12 and O157.</title>
        <authorList>
            <person name="Jin Q."/>
            <person name="Yuan Z."/>
            <person name="Xu J."/>
            <person name="Wang Y."/>
            <person name="Shen Y."/>
            <person name="Lu W."/>
            <person name="Wang J."/>
            <person name="Liu H."/>
            <person name="Yang J."/>
            <person name="Yang F."/>
            <person name="Zhang X."/>
            <person name="Zhang J."/>
            <person name="Yang G."/>
            <person name="Wu H."/>
            <person name="Qu D."/>
            <person name="Dong J."/>
            <person name="Sun L."/>
            <person name="Xue Y."/>
            <person name="Zhao A."/>
            <person name="Gao Y."/>
            <person name="Zhu J."/>
            <person name="Kan B."/>
            <person name="Ding K."/>
            <person name="Chen S."/>
            <person name="Cheng H."/>
            <person name="Yao Z."/>
            <person name="He B."/>
            <person name="Chen R."/>
            <person name="Ma D."/>
            <person name="Qiang B."/>
            <person name="Wen Y."/>
            <person name="Hou Y."/>
            <person name="Yu J."/>
        </authorList>
    </citation>
    <scope>NUCLEOTIDE SEQUENCE [LARGE SCALE GENOMIC DNA]</scope>
    <source>
        <strain>301 / Serotype 2a</strain>
    </source>
</reference>
<reference key="2">
    <citation type="journal article" date="2003" name="Infect. Immun.">
        <title>Complete genome sequence and comparative genomics of Shigella flexneri serotype 2a strain 2457T.</title>
        <authorList>
            <person name="Wei J."/>
            <person name="Goldberg M.B."/>
            <person name="Burland V."/>
            <person name="Venkatesan M.M."/>
            <person name="Deng W."/>
            <person name="Fournier G."/>
            <person name="Mayhew G.F."/>
            <person name="Plunkett G. III"/>
            <person name="Rose D.J."/>
            <person name="Darling A."/>
            <person name="Mau B."/>
            <person name="Perna N.T."/>
            <person name="Payne S.M."/>
            <person name="Runyen-Janecky L.J."/>
            <person name="Zhou S."/>
            <person name="Schwartz D.C."/>
            <person name="Blattner F.R."/>
        </authorList>
    </citation>
    <scope>NUCLEOTIDE SEQUENCE [LARGE SCALE GENOMIC DNA]</scope>
    <source>
        <strain>ATCC 700930 / 2457T / Serotype 2a</strain>
    </source>
</reference>
<comment type="subcellular location">
    <subcellularLocation>
        <location evidence="2">Cytoplasm</location>
        <location evidence="2">Nucleoid</location>
    </subcellularLocation>
</comment>
<comment type="similarity">
    <text evidence="2">Belongs to the YejK family.</text>
</comment>
<organism>
    <name type="scientific">Shigella flexneri</name>
    <dbReference type="NCBI Taxonomy" id="623"/>
    <lineage>
        <taxon>Bacteria</taxon>
        <taxon>Pseudomonadati</taxon>
        <taxon>Pseudomonadota</taxon>
        <taxon>Gammaproteobacteria</taxon>
        <taxon>Enterobacterales</taxon>
        <taxon>Enterobacteriaceae</taxon>
        <taxon>Shigella</taxon>
    </lineage>
</organism>
<accession>Q83KD8</accession>
<accession>Q7UC80</accession>
<feature type="initiator methionine" description="Removed" evidence="1">
    <location>
        <position position="1"/>
    </location>
</feature>
<feature type="chain" id="PRO_0000210920" description="Nucleoid-associated protein YejK">
    <location>
        <begin position="2"/>
        <end position="335"/>
    </location>
</feature>
<feature type="sequence conflict" description="In Ref. 2; AAP17609." evidence="3" ref="2">
    <original>H</original>
    <variation>Q</variation>
    <location>
        <position position="7"/>
    </location>
</feature>
<sequence>MSLDINHIALHQLIKRDEQNLELVLRDSLLEPTETVVEMVAELHRVYSAKNKAYGLFSEESELAQTLRLQRQGEEDFLAFSRAATGRLRDELAKYPFADGGFVLFCHYRYLAVEYLLVAVLSNLSSMRVNENLDINPTHYLDINHADIVARIDLTEWETNPESTRYLTFLKGRVGRKVADFFMDFLGASEGLNAKAQNRGLLQAVDDFTAEAQLDKAERQNVRQQVYSYCNEQLQAGEEIELESLSKELAGVSEVSFTEFAAEKGYELEESFPADRSTLRQLTKFAGSGGGLTINFDAMLLGERIFWDPATDTLTIKGTPPNLRDQLQRRTSGGN</sequence>
<evidence type="ECO:0000250" key="1"/>
<evidence type="ECO:0000255" key="2">
    <source>
        <dbReference type="HAMAP-Rule" id="MF_00730"/>
    </source>
</evidence>
<evidence type="ECO:0000305" key="3"/>
<name>NDPA_SHIFL</name>
<dbReference type="EMBL" id="AE005674">
    <property type="protein sequence ID" value="AAN43792.1"/>
    <property type="molecule type" value="Genomic_DNA"/>
</dbReference>
<dbReference type="EMBL" id="AE014073">
    <property type="protein sequence ID" value="AAP17609.1"/>
    <property type="molecule type" value="Genomic_DNA"/>
</dbReference>
<dbReference type="RefSeq" id="NP_708085.1">
    <property type="nucleotide sequence ID" value="NC_004337.2"/>
</dbReference>
<dbReference type="RefSeq" id="WP_000050770.1">
    <property type="nucleotide sequence ID" value="NZ_CP123365.1"/>
</dbReference>
<dbReference type="SMR" id="Q83KD8"/>
<dbReference type="STRING" id="198214.SF2273"/>
<dbReference type="PaxDb" id="198214-SF2273"/>
<dbReference type="GeneID" id="1025426"/>
<dbReference type="KEGG" id="sfl:SF2273"/>
<dbReference type="KEGG" id="sfx:S2402"/>
<dbReference type="PATRIC" id="fig|198214.7.peg.2722"/>
<dbReference type="HOGENOM" id="CLU_063050_0_1_6"/>
<dbReference type="Proteomes" id="UP000001006">
    <property type="component" value="Chromosome"/>
</dbReference>
<dbReference type="Proteomes" id="UP000002673">
    <property type="component" value="Chromosome"/>
</dbReference>
<dbReference type="GO" id="GO:0043590">
    <property type="term" value="C:bacterial nucleoid"/>
    <property type="evidence" value="ECO:0007669"/>
    <property type="project" value="TreeGrafter"/>
</dbReference>
<dbReference type="GO" id="GO:0005737">
    <property type="term" value="C:cytoplasm"/>
    <property type="evidence" value="ECO:0007669"/>
    <property type="project" value="UniProtKB-UniRule"/>
</dbReference>
<dbReference type="GO" id="GO:0003690">
    <property type="term" value="F:double-stranded DNA binding"/>
    <property type="evidence" value="ECO:0007669"/>
    <property type="project" value="TreeGrafter"/>
</dbReference>
<dbReference type="GO" id="GO:0003727">
    <property type="term" value="F:single-stranded RNA binding"/>
    <property type="evidence" value="ECO:0007669"/>
    <property type="project" value="TreeGrafter"/>
</dbReference>
<dbReference type="HAMAP" id="MF_00730">
    <property type="entry name" value="NdpA"/>
    <property type="match status" value="1"/>
</dbReference>
<dbReference type="InterPro" id="IPR007358">
    <property type="entry name" value="Nucleoid_associated_NdpA"/>
</dbReference>
<dbReference type="NCBIfam" id="NF001557">
    <property type="entry name" value="PRK00378.1"/>
    <property type="match status" value="1"/>
</dbReference>
<dbReference type="PANTHER" id="PTHR38772">
    <property type="match status" value="1"/>
</dbReference>
<dbReference type="PANTHER" id="PTHR38772:SF1">
    <property type="entry name" value="NUCLEOID-ASSOCIATED PROTEIN YEJK"/>
    <property type="match status" value="1"/>
</dbReference>
<dbReference type="Pfam" id="PF04245">
    <property type="entry name" value="NA37"/>
    <property type="match status" value="1"/>
</dbReference>
<keyword id="KW-0963">Cytoplasm</keyword>
<keyword id="KW-1185">Reference proteome</keyword>
<protein>
    <recommendedName>
        <fullName evidence="2">Nucleoid-associated protein YejK</fullName>
    </recommendedName>
</protein>
<proteinExistence type="inferred from homology"/>